<accession>P11742</accession>
<feature type="chain" id="PRO_0000139364" description="Methylated-DNA--protein-cysteine methyltransferase, constitutive">
    <location>
        <begin position="1"/>
        <end position="165"/>
    </location>
</feature>
<feature type="active site" description="Nucleophile; methyl group acceptor" evidence="1">
    <location>
        <position position="130"/>
    </location>
</feature>
<name>OGT_BACSU</name>
<proteinExistence type="evidence at protein level"/>
<keyword id="KW-0963">Cytoplasm</keyword>
<keyword id="KW-0227">DNA damage</keyword>
<keyword id="KW-0234">DNA repair</keyword>
<keyword id="KW-0489">Methyltransferase</keyword>
<keyword id="KW-1185">Reference proteome</keyword>
<keyword id="KW-0808">Transferase</keyword>
<dbReference type="EC" id="2.1.1.63" evidence="1 2"/>
<dbReference type="EMBL" id="X15659">
    <property type="protein sequence ID" value="CAA33694.1"/>
    <property type="molecule type" value="Genomic_DNA"/>
</dbReference>
<dbReference type="EMBL" id="AL009126">
    <property type="protein sequence ID" value="CAB13227.1"/>
    <property type="molecule type" value="Genomic_DNA"/>
</dbReference>
<dbReference type="PIR" id="S04877">
    <property type="entry name" value="XUBSM1"/>
</dbReference>
<dbReference type="RefSeq" id="NP_389237.1">
    <property type="nucleotide sequence ID" value="NC_000964.3"/>
</dbReference>
<dbReference type="RefSeq" id="WP_003232502.1">
    <property type="nucleotide sequence ID" value="NZ_OZ025638.1"/>
</dbReference>
<dbReference type="SMR" id="P11742"/>
<dbReference type="FunCoup" id="P11742">
    <property type="interactions" value="66"/>
</dbReference>
<dbReference type="STRING" id="224308.BSU13540"/>
<dbReference type="PaxDb" id="224308-BSU13540"/>
<dbReference type="EnsemblBacteria" id="CAB13227">
    <property type="protein sequence ID" value="CAB13227"/>
    <property type="gene ID" value="BSU_13540"/>
</dbReference>
<dbReference type="GeneID" id="939332"/>
<dbReference type="KEGG" id="bsu:BSU13540"/>
<dbReference type="PATRIC" id="fig|224308.179.peg.1470"/>
<dbReference type="eggNOG" id="COG0350">
    <property type="taxonomic scope" value="Bacteria"/>
</dbReference>
<dbReference type="InParanoid" id="P11742"/>
<dbReference type="OrthoDB" id="9802228at2"/>
<dbReference type="PhylomeDB" id="P11742"/>
<dbReference type="BioCyc" id="BSUB:BSU13540-MONOMER"/>
<dbReference type="Proteomes" id="UP000001570">
    <property type="component" value="Chromosome"/>
</dbReference>
<dbReference type="GO" id="GO:0005737">
    <property type="term" value="C:cytoplasm"/>
    <property type="evidence" value="ECO:0007669"/>
    <property type="project" value="UniProtKB-SubCell"/>
</dbReference>
<dbReference type="GO" id="GO:0003908">
    <property type="term" value="F:methylated-DNA-[protein]-cysteine S-methyltransferase activity"/>
    <property type="evidence" value="ECO:0007669"/>
    <property type="project" value="UniProtKB-UniRule"/>
</dbReference>
<dbReference type="GO" id="GO:0006307">
    <property type="term" value="P:DNA alkylation repair"/>
    <property type="evidence" value="ECO:0007669"/>
    <property type="project" value="UniProtKB-UniRule"/>
</dbReference>
<dbReference type="GO" id="GO:0032259">
    <property type="term" value="P:methylation"/>
    <property type="evidence" value="ECO:0007669"/>
    <property type="project" value="UniProtKB-KW"/>
</dbReference>
<dbReference type="CDD" id="cd06445">
    <property type="entry name" value="ATase"/>
    <property type="match status" value="1"/>
</dbReference>
<dbReference type="FunFam" id="1.10.10.10:FF:000214">
    <property type="entry name" value="Methylated-DNA--protein-cysteine methyltransferase"/>
    <property type="match status" value="1"/>
</dbReference>
<dbReference type="Gene3D" id="3.30.160.70">
    <property type="entry name" value="Methylated DNA-protein cysteine methyltransferase domain"/>
    <property type="match status" value="1"/>
</dbReference>
<dbReference type="Gene3D" id="1.10.10.10">
    <property type="entry name" value="Winged helix-like DNA-binding domain superfamily/Winged helix DNA-binding domain"/>
    <property type="match status" value="1"/>
</dbReference>
<dbReference type="HAMAP" id="MF_00772">
    <property type="entry name" value="OGT"/>
    <property type="match status" value="1"/>
</dbReference>
<dbReference type="InterPro" id="IPR001497">
    <property type="entry name" value="MethylDNA_cys_MeTrfase_AS"/>
</dbReference>
<dbReference type="InterPro" id="IPR014048">
    <property type="entry name" value="MethylDNA_cys_MeTrfase_DNA-bd"/>
</dbReference>
<dbReference type="InterPro" id="IPR036217">
    <property type="entry name" value="MethylDNA_cys_MeTrfase_DNAb"/>
</dbReference>
<dbReference type="InterPro" id="IPR008332">
    <property type="entry name" value="MethylG_MeTrfase_N"/>
</dbReference>
<dbReference type="InterPro" id="IPR023546">
    <property type="entry name" value="MGMT"/>
</dbReference>
<dbReference type="InterPro" id="IPR036631">
    <property type="entry name" value="MGMT_N_sf"/>
</dbReference>
<dbReference type="InterPro" id="IPR036388">
    <property type="entry name" value="WH-like_DNA-bd_sf"/>
</dbReference>
<dbReference type="NCBIfam" id="TIGR00589">
    <property type="entry name" value="ogt"/>
    <property type="match status" value="1"/>
</dbReference>
<dbReference type="PANTHER" id="PTHR10815">
    <property type="entry name" value="METHYLATED-DNA--PROTEIN-CYSTEINE METHYLTRANSFERASE"/>
    <property type="match status" value="1"/>
</dbReference>
<dbReference type="PANTHER" id="PTHR10815:SF5">
    <property type="entry name" value="METHYLATED-DNA--PROTEIN-CYSTEINE METHYLTRANSFERASE"/>
    <property type="match status" value="1"/>
</dbReference>
<dbReference type="Pfam" id="PF01035">
    <property type="entry name" value="DNA_binding_1"/>
    <property type="match status" value="1"/>
</dbReference>
<dbReference type="Pfam" id="PF02870">
    <property type="entry name" value="Methyltransf_1N"/>
    <property type="match status" value="1"/>
</dbReference>
<dbReference type="SUPFAM" id="SSF53155">
    <property type="entry name" value="Methylated DNA-protein cysteine methyltransferase domain"/>
    <property type="match status" value="1"/>
</dbReference>
<dbReference type="SUPFAM" id="SSF46767">
    <property type="entry name" value="Methylated DNA-protein cysteine methyltransferase, C-terminal domain"/>
    <property type="match status" value="1"/>
</dbReference>
<dbReference type="PROSITE" id="PS00374">
    <property type="entry name" value="MGMT"/>
    <property type="match status" value="1"/>
</dbReference>
<protein>
    <recommendedName>
        <fullName evidence="1">Methylated-DNA--protein-cysteine methyltransferase, constitutive</fullName>
        <ecNumber evidence="1 2">2.1.1.63</ecNumber>
    </recommendedName>
    <alternativeName>
        <fullName evidence="1">6-O-methylguanine-DNA methyltransferase</fullName>
        <shortName evidence="1">MGMT</shortName>
    </alternativeName>
    <alternativeName>
        <fullName evidence="1">O-6-methylguanine-DNA-alkyltransferase</fullName>
    </alternativeName>
</protein>
<organism>
    <name type="scientific">Bacillus subtilis (strain 168)</name>
    <dbReference type="NCBI Taxonomy" id="224308"/>
    <lineage>
        <taxon>Bacteria</taxon>
        <taxon>Bacillati</taxon>
        <taxon>Bacillota</taxon>
        <taxon>Bacilli</taxon>
        <taxon>Bacillales</taxon>
        <taxon>Bacillaceae</taxon>
        <taxon>Bacillus</taxon>
    </lineage>
</organism>
<reference key="1">
    <citation type="journal article" date="1989" name="Mutat. Res.">
        <title>Cloning and expression of the Bacillus subtilis methyltransferase gene in Escherichia coli ada- cells.</title>
        <authorList>
            <person name="Kodama K."/>
            <person name="Nakabeppu Y."/>
            <person name="Sekiguchi M."/>
        </authorList>
    </citation>
    <scope>NUCLEOTIDE SEQUENCE [GENOMIC DNA]</scope>
</reference>
<reference key="2">
    <citation type="journal article" date="1989" name="Nucleic Acids Res.">
        <title>Bacillus subtilis gene coding for constitutive O6-methylguanine-DNA alkyltransferase.</title>
        <authorList>
            <person name="Morohoshi F."/>
            <person name="Hayashi K."/>
            <person name="Munakata N."/>
        </authorList>
    </citation>
    <scope>NUCLEOTIDE SEQUENCE [GENOMIC DNA]</scope>
    <source>
        <strain>168</strain>
    </source>
</reference>
<reference key="3">
    <citation type="journal article" date="1997" name="Nature">
        <title>The complete genome sequence of the Gram-positive bacterium Bacillus subtilis.</title>
        <authorList>
            <person name="Kunst F."/>
            <person name="Ogasawara N."/>
            <person name="Moszer I."/>
            <person name="Albertini A.M."/>
            <person name="Alloni G."/>
            <person name="Azevedo V."/>
            <person name="Bertero M.G."/>
            <person name="Bessieres P."/>
            <person name="Bolotin A."/>
            <person name="Borchert S."/>
            <person name="Borriss R."/>
            <person name="Boursier L."/>
            <person name="Brans A."/>
            <person name="Braun M."/>
            <person name="Brignell S.C."/>
            <person name="Bron S."/>
            <person name="Brouillet S."/>
            <person name="Bruschi C.V."/>
            <person name="Caldwell B."/>
            <person name="Capuano V."/>
            <person name="Carter N.M."/>
            <person name="Choi S.-K."/>
            <person name="Codani J.-J."/>
            <person name="Connerton I.F."/>
            <person name="Cummings N.J."/>
            <person name="Daniel R.A."/>
            <person name="Denizot F."/>
            <person name="Devine K.M."/>
            <person name="Duesterhoeft A."/>
            <person name="Ehrlich S.D."/>
            <person name="Emmerson P.T."/>
            <person name="Entian K.-D."/>
            <person name="Errington J."/>
            <person name="Fabret C."/>
            <person name="Ferrari E."/>
            <person name="Foulger D."/>
            <person name="Fritz C."/>
            <person name="Fujita M."/>
            <person name="Fujita Y."/>
            <person name="Fuma S."/>
            <person name="Galizzi A."/>
            <person name="Galleron N."/>
            <person name="Ghim S.-Y."/>
            <person name="Glaser P."/>
            <person name="Goffeau A."/>
            <person name="Golightly E.J."/>
            <person name="Grandi G."/>
            <person name="Guiseppi G."/>
            <person name="Guy B.J."/>
            <person name="Haga K."/>
            <person name="Haiech J."/>
            <person name="Harwood C.R."/>
            <person name="Henaut A."/>
            <person name="Hilbert H."/>
            <person name="Holsappel S."/>
            <person name="Hosono S."/>
            <person name="Hullo M.-F."/>
            <person name="Itaya M."/>
            <person name="Jones L.-M."/>
            <person name="Joris B."/>
            <person name="Karamata D."/>
            <person name="Kasahara Y."/>
            <person name="Klaerr-Blanchard M."/>
            <person name="Klein C."/>
            <person name="Kobayashi Y."/>
            <person name="Koetter P."/>
            <person name="Koningstein G."/>
            <person name="Krogh S."/>
            <person name="Kumano M."/>
            <person name="Kurita K."/>
            <person name="Lapidus A."/>
            <person name="Lardinois S."/>
            <person name="Lauber J."/>
            <person name="Lazarevic V."/>
            <person name="Lee S.-M."/>
            <person name="Levine A."/>
            <person name="Liu H."/>
            <person name="Masuda S."/>
            <person name="Mauel C."/>
            <person name="Medigue C."/>
            <person name="Medina N."/>
            <person name="Mellado R.P."/>
            <person name="Mizuno M."/>
            <person name="Moestl D."/>
            <person name="Nakai S."/>
            <person name="Noback M."/>
            <person name="Noone D."/>
            <person name="O'Reilly M."/>
            <person name="Ogawa K."/>
            <person name="Ogiwara A."/>
            <person name="Oudega B."/>
            <person name="Park S.-H."/>
            <person name="Parro V."/>
            <person name="Pohl T.M."/>
            <person name="Portetelle D."/>
            <person name="Porwollik S."/>
            <person name="Prescott A.M."/>
            <person name="Presecan E."/>
            <person name="Pujic P."/>
            <person name="Purnelle B."/>
            <person name="Rapoport G."/>
            <person name="Rey M."/>
            <person name="Reynolds S."/>
            <person name="Rieger M."/>
            <person name="Rivolta C."/>
            <person name="Rocha E."/>
            <person name="Roche B."/>
            <person name="Rose M."/>
            <person name="Sadaie Y."/>
            <person name="Sato T."/>
            <person name="Scanlan E."/>
            <person name="Schleich S."/>
            <person name="Schroeter R."/>
            <person name="Scoffone F."/>
            <person name="Sekiguchi J."/>
            <person name="Sekowska A."/>
            <person name="Seror S.J."/>
            <person name="Serror P."/>
            <person name="Shin B.-S."/>
            <person name="Soldo B."/>
            <person name="Sorokin A."/>
            <person name="Tacconi E."/>
            <person name="Takagi T."/>
            <person name="Takahashi H."/>
            <person name="Takemaru K."/>
            <person name="Takeuchi M."/>
            <person name="Tamakoshi A."/>
            <person name="Tanaka T."/>
            <person name="Terpstra P."/>
            <person name="Tognoni A."/>
            <person name="Tosato V."/>
            <person name="Uchiyama S."/>
            <person name="Vandenbol M."/>
            <person name="Vannier F."/>
            <person name="Vassarotti A."/>
            <person name="Viari A."/>
            <person name="Wambutt R."/>
            <person name="Wedler E."/>
            <person name="Wedler H."/>
            <person name="Weitzenegger T."/>
            <person name="Winters P."/>
            <person name="Wipat A."/>
            <person name="Yamamoto H."/>
            <person name="Yamane K."/>
            <person name="Yasumoto K."/>
            <person name="Yata K."/>
            <person name="Yoshida K."/>
            <person name="Yoshikawa H.-F."/>
            <person name="Zumstein E."/>
            <person name="Yoshikawa H."/>
            <person name="Danchin A."/>
        </authorList>
    </citation>
    <scope>NUCLEOTIDE SEQUENCE [LARGE SCALE GENOMIC DNA]</scope>
    <source>
        <strain>168</strain>
    </source>
</reference>
<reference key="4">
    <citation type="journal article" date="1987" name="J. Bacteriol.">
        <title>Multiple species of Bacillus subtilis DNA alkyltransferase involved in the adaptive response to simple alkylating agents.</title>
        <authorList>
            <person name="Morohoshi F."/>
            <person name="Munakata N."/>
        </authorList>
    </citation>
    <scope>FUNCTION</scope>
    <scope>CATALYTIC ACTIVITY</scope>
    <scope>INDUCTION</scope>
    <source>
        <strain>168</strain>
    </source>
</reference>
<evidence type="ECO:0000255" key="1">
    <source>
        <dbReference type="HAMAP-Rule" id="MF_00772"/>
    </source>
</evidence>
<evidence type="ECO:0000269" key="2">
    <source>
    </source>
</evidence>
<sequence length="165" mass="18752">MNYYTTAETPLGELIIAEEEDRITRLFLSQEDWVDWKETVQNTEHKETPNLAEAKQQLQEYFAGERKTFSLPLSQKGTPFQQKVWQALERIPYGESRSYADIAAAVGSPKAVRAVGQANKRNDLPIFVPCHRVIGKNSALTGYAGSKTEIKAFLLNIERISYKEK</sequence>
<comment type="function">
    <text evidence="1 2">Involved in the cellular defense against the biological effects of O6-methylguanine (O6-MeG) and O4-methylthymine (O4-MeT) in DNA. Repairs the methylated nucleobase in DNA by stoichiometrically transferring the methyl group to a cysteine residue in the enzyme. This is a suicide reaction: the enzyme is irreversibly inactivated.</text>
</comment>
<comment type="catalytic activity">
    <reaction evidence="1 2">
        <text>a 6-O-methyl-2'-deoxyguanosine in DNA + L-cysteinyl-[protein] = S-methyl-L-cysteinyl-[protein] + a 2'-deoxyguanosine in DNA</text>
        <dbReference type="Rhea" id="RHEA:24000"/>
        <dbReference type="Rhea" id="RHEA-COMP:10131"/>
        <dbReference type="Rhea" id="RHEA-COMP:10132"/>
        <dbReference type="Rhea" id="RHEA-COMP:11367"/>
        <dbReference type="Rhea" id="RHEA-COMP:11368"/>
        <dbReference type="ChEBI" id="CHEBI:29950"/>
        <dbReference type="ChEBI" id="CHEBI:82612"/>
        <dbReference type="ChEBI" id="CHEBI:85445"/>
        <dbReference type="ChEBI" id="CHEBI:85448"/>
        <dbReference type="EC" id="2.1.1.63"/>
    </reaction>
</comment>
<comment type="catalytic activity">
    <reaction evidence="1 2">
        <text>a 4-O-methyl-thymidine in DNA + L-cysteinyl-[protein] = a thymidine in DNA + S-methyl-L-cysteinyl-[protein]</text>
        <dbReference type="Rhea" id="RHEA:53428"/>
        <dbReference type="Rhea" id="RHEA-COMP:10131"/>
        <dbReference type="Rhea" id="RHEA-COMP:10132"/>
        <dbReference type="Rhea" id="RHEA-COMP:13555"/>
        <dbReference type="Rhea" id="RHEA-COMP:13556"/>
        <dbReference type="ChEBI" id="CHEBI:29950"/>
        <dbReference type="ChEBI" id="CHEBI:82612"/>
        <dbReference type="ChEBI" id="CHEBI:137386"/>
        <dbReference type="ChEBI" id="CHEBI:137387"/>
        <dbReference type="EC" id="2.1.1.63"/>
    </reaction>
</comment>
<comment type="subcellular location">
    <subcellularLocation>
        <location evidence="1">Cytoplasm</location>
    </subcellularLocation>
</comment>
<comment type="induction">
    <text evidence="2">Constitutively expressed.</text>
</comment>
<comment type="miscellaneous">
    <text>Bacillus subtilis contains 2 species of O-6-methylguanine-DNA alkyltransferases. Ogt and adaB are regulated in different ways, constitutively and inducibly on adaptive treatment, respectively.</text>
</comment>
<comment type="miscellaneous">
    <text>This enzyme catalyzes only one turnover and therefore is not strictly catalytic. According to one definition, an enzyme is a biocatalyst that acts repeatedly and over many reaction cycles.</text>
</comment>
<comment type="similarity">
    <text evidence="1">Belongs to the MGMT family.</text>
</comment>
<gene>
    <name evidence="1" type="primary">ogt</name>
    <name type="synonym">dat</name>
    <name type="synonym">dat1</name>
    <name type="ordered locus">BSU13540</name>
</gene>